<evidence type="ECO:0000250" key="1">
    <source>
        <dbReference type="UniProtKB" id="P45548"/>
    </source>
</evidence>
<evidence type="ECO:0000255" key="2">
    <source>
        <dbReference type="PROSITE-ProRule" id="PRU00679"/>
    </source>
</evidence>
<reference key="1">
    <citation type="journal article" date="2000" name="Science">
        <title>The genome sequence of Drosophila melanogaster.</title>
        <authorList>
            <person name="Adams M.D."/>
            <person name="Celniker S.E."/>
            <person name="Holt R.A."/>
            <person name="Evans C.A."/>
            <person name="Gocayne J.D."/>
            <person name="Amanatides P.G."/>
            <person name="Scherer S.E."/>
            <person name="Li P.W."/>
            <person name="Hoskins R.A."/>
            <person name="Galle R.F."/>
            <person name="George R.A."/>
            <person name="Lewis S.E."/>
            <person name="Richards S."/>
            <person name="Ashburner M."/>
            <person name="Henderson S.N."/>
            <person name="Sutton G.G."/>
            <person name="Wortman J.R."/>
            <person name="Yandell M.D."/>
            <person name="Zhang Q."/>
            <person name="Chen L.X."/>
            <person name="Brandon R.C."/>
            <person name="Rogers Y.-H.C."/>
            <person name="Blazej R.G."/>
            <person name="Champe M."/>
            <person name="Pfeiffer B.D."/>
            <person name="Wan K.H."/>
            <person name="Doyle C."/>
            <person name="Baxter E.G."/>
            <person name="Helt G."/>
            <person name="Nelson C.R."/>
            <person name="Miklos G.L.G."/>
            <person name="Abril J.F."/>
            <person name="Agbayani A."/>
            <person name="An H.-J."/>
            <person name="Andrews-Pfannkoch C."/>
            <person name="Baldwin D."/>
            <person name="Ballew R.M."/>
            <person name="Basu A."/>
            <person name="Baxendale J."/>
            <person name="Bayraktaroglu L."/>
            <person name="Beasley E.M."/>
            <person name="Beeson K.Y."/>
            <person name="Benos P.V."/>
            <person name="Berman B.P."/>
            <person name="Bhandari D."/>
            <person name="Bolshakov S."/>
            <person name="Borkova D."/>
            <person name="Botchan M.R."/>
            <person name="Bouck J."/>
            <person name="Brokstein P."/>
            <person name="Brottier P."/>
            <person name="Burtis K.C."/>
            <person name="Busam D.A."/>
            <person name="Butler H."/>
            <person name="Cadieu E."/>
            <person name="Center A."/>
            <person name="Chandra I."/>
            <person name="Cherry J.M."/>
            <person name="Cawley S."/>
            <person name="Dahlke C."/>
            <person name="Davenport L.B."/>
            <person name="Davies P."/>
            <person name="de Pablos B."/>
            <person name="Delcher A."/>
            <person name="Deng Z."/>
            <person name="Mays A.D."/>
            <person name="Dew I."/>
            <person name="Dietz S.M."/>
            <person name="Dodson K."/>
            <person name="Doup L.E."/>
            <person name="Downes M."/>
            <person name="Dugan-Rocha S."/>
            <person name="Dunkov B.C."/>
            <person name="Dunn P."/>
            <person name="Durbin K.J."/>
            <person name="Evangelista C.C."/>
            <person name="Ferraz C."/>
            <person name="Ferriera S."/>
            <person name="Fleischmann W."/>
            <person name="Fosler C."/>
            <person name="Gabrielian A.E."/>
            <person name="Garg N.S."/>
            <person name="Gelbart W.M."/>
            <person name="Glasser K."/>
            <person name="Glodek A."/>
            <person name="Gong F."/>
            <person name="Gorrell J.H."/>
            <person name="Gu Z."/>
            <person name="Guan P."/>
            <person name="Harris M."/>
            <person name="Harris N.L."/>
            <person name="Harvey D.A."/>
            <person name="Heiman T.J."/>
            <person name="Hernandez J.R."/>
            <person name="Houck J."/>
            <person name="Hostin D."/>
            <person name="Houston K.A."/>
            <person name="Howland T.J."/>
            <person name="Wei M.-H."/>
            <person name="Ibegwam C."/>
            <person name="Jalali M."/>
            <person name="Kalush F."/>
            <person name="Karpen G.H."/>
            <person name="Ke Z."/>
            <person name="Kennison J.A."/>
            <person name="Ketchum K.A."/>
            <person name="Kimmel B.E."/>
            <person name="Kodira C.D."/>
            <person name="Kraft C.L."/>
            <person name="Kravitz S."/>
            <person name="Kulp D."/>
            <person name="Lai Z."/>
            <person name="Lasko P."/>
            <person name="Lei Y."/>
            <person name="Levitsky A.A."/>
            <person name="Li J.H."/>
            <person name="Li Z."/>
            <person name="Liang Y."/>
            <person name="Lin X."/>
            <person name="Liu X."/>
            <person name="Mattei B."/>
            <person name="McIntosh T.C."/>
            <person name="McLeod M.P."/>
            <person name="McPherson D."/>
            <person name="Merkulov G."/>
            <person name="Milshina N.V."/>
            <person name="Mobarry C."/>
            <person name="Morris J."/>
            <person name="Moshrefi A."/>
            <person name="Mount S.M."/>
            <person name="Moy M."/>
            <person name="Murphy B."/>
            <person name="Murphy L."/>
            <person name="Muzny D.M."/>
            <person name="Nelson D.L."/>
            <person name="Nelson D.R."/>
            <person name="Nelson K.A."/>
            <person name="Nixon K."/>
            <person name="Nusskern D.R."/>
            <person name="Pacleb J.M."/>
            <person name="Palazzolo M."/>
            <person name="Pittman G.S."/>
            <person name="Pan S."/>
            <person name="Pollard J."/>
            <person name="Puri V."/>
            <person name="Reese M.G."/>
            <person name="Reinert K."/>
            <person name="Remington K."/>
            <person name="Saunders R.D.C."/>
            <person name="Scheeler F."/>
            <person name="Shen H."/>
            <person name="Shue B.C."/>
            <person name="Siden-Kiamos I."/>
            <person name="Simpson M."/>
            <person name="Skupski M.P."/>
            <person name="Smith T.J."/>
            <person name="Spier E."/>
            <person name="Spradling A.C."/>
            <person name="Stapleton M."/>
            <person name="Strong R."/>
            <person name="Sun E."/>
            <person name="Svirskas R."/>
            <person name="Tector C."/>
            <person name="Turner R."/>
            <person name="Venter E."/>
            <person name="Wang A.H."/>
            <person name="Wang X."/>
            <person name="Wang Z.-Y."/>
            <person name="Wassarman D.A."/>
            <person name="Weinstock G.M."/>
            <person name="Weissenbach J."/>
            <person name="Williams S.M."/>
            <person name="Woodage T."/>
            <person name="Worley K.C."/>
            <person name="Wu D."/>
            <person name="Yang S."/>
            <person name="Yao Q.A."/>
            <person name="Ye J."/>
            <person name="Yeh R.-F."/>
            <person name="Zaveri J.S."/>
            <person name="Zhan M."/>
            <person name="Zhang G."/>
            <person name="Zhao Q."/>
            <person name="Zheng L."/>
            <person name="Zheng X.H."/>
            <person name="Zhong F.N."/>
            <person name="Zhong W."/>
            <person name="Zhou X."/>
            <person name="Zhu S.C."/>
            <person name="Zhu X."/>
            <person name="Smith H.O."/>
            <person name="Gibbs R.A."/>
            <person name="Myers E.W."/>
            <person name="Rubin G.M."/>
            <person name="Venter J.C."/>
        </authorList>
    </citation>
    <scope>NUCLEOTIDE SEQUENCE [LARGE SCALE GENOMIC DNA]</scope>
    <source>
        <strain>Berkeley</strain>
    </source>
</reference>
<reference key="2">
    <citation type="journal article" date="2002" name="Genome Biol.">
        <title>Annotation of the Drosophila melanogaster euchromatic genome: a systematic review.</title>
        <authorList>
            <person name="Misra S."/>
            <person name="Crosby M.A."/>
            <person name="Mungall C.J."/>
            <person name="Matthews B.B."/>
            <person name="Campbell K.S."/>
            <person name="Hradecky P."/>
            <person name="Huang Y."/>
            <person name="Kaminker J.S."/>
            <person name="Millburn G.H."/>
            <person name="Prochnik S.E."/>
            <person name="Smith C.D."/>
            <person name="Tupy J.L."/>
            <person name="Whitfield E.J."/>
            <person name="Bayraktaroglu L."/>
            <person name="Berman B.P."/>
            <person name="Bettencourt B.R."/>
            <person name="Celniker S.E."/>
            <person name="de Grey A.D.N.J."/>
            <person name="Drysdale R.A."/>
            <person name="Harris N.L."/>
            <person name="Richter J."/>
            <person name="Russo S."/>
            <person name="Schroeder A.J."/>
            <person name="Shu S.Q."/>
            <person name="Stapleton M."/>
            <person name="Yamada C."/>
            <person name="Ashburner M."/>
            <person name="Gelbart W.M."/>
            <person name="Rubin G.M."/>
            <person name="Lewis S.E."/>
        </authorList>
    </citation>
    <scope>GENOME REANNOTATION</scope>
    <source>
        <strain>Berkeley</strain>
    </source>
</reference>
<reference key="3">
    <citation type="journal article" date="2002" name="Genome Biol.">
        <title>A Drosophila full-length cDNA resource.</title>
        <authorList>
            <person name="Stapleton M."/>
            <person name="Carlson J.W."/>
            <person name="Brokstein P."/>
            <person name="Yu C."/>
            <person name="Champe M."/>
            <person name="George R.A."/>
            <person name="Guarin H."/>
            <person name="Kronmiller B."/>
            <person name="Pacleb J.M."/>
            <person name="Park S."/>
            <person name="Wan K.H."/>
            <person name="Rubin G.M."/>
            <person name="Celniker S.E."/>
        </authorList>
    </citation>
    <scope>NUCLEOTIDE SEQUENCE [LARGE SCALE MRNA]</scope>
    <source>
        <strain>Berkeley</strain>
    </source>
</reference>
<comment type="cofactor">
    <cofactor evidence="1">
        <name>a divalent metal cation</name>
        <dbReference type="ChEBI" id="CHEBI:60240"/>
    </cofactor>
    <text evidence="1">Binds 2 divalent metal cations per subunit.</text>
</comment>
<comment type="similarity">
    <text evidence="2">Belongs to the metallo-dependent hydrolases superfamily. Phosphotriesterase family.</text>
</comment>
<accession>Q9VHF2</accession>
<protein>
    <recommendedName>
        <fullName>Phosphotriesterase-related protein</fullName>
        <ecNumber>3.1.-.-</ecNumber>
    </recommendedName>
    <alternativeName>
        <fullName>Parathion hydrolase-related protein</fullName>
    </alternativeName>
</protein>
<name>PTER_DROME</name>
<feature type="chain" id="PRO_0000205367" description="Phosphotriesterase-related protein">
    <location>
        <begin position="1"/>
        <end position="350"/>
    </location>
</feature>
<feature type="binding site" evidence="1">
    <location>
        <position position="22"/>
    </location>
    <ligand>
        <name>a divalent metal cation</name>
        <dbReference type="ChEBI" id="CHEBI:60240"/>
        <label>1</label>
    </ligand>
</feature>
<feature type="binding site" evidence="1">
    <location>
        <position position="24"/>
    </location>
    <ligand>
        <name>a divalent metal cation</name>
        <dbReference type="ChEBI" id="CHEBI:60240"/>
        <label>1</label>
    </ligand>
</feature>
<feature type="binding site" evidence="1">
    <location>
        <position position="169"/>
    </location>
    <ligand>
        <name>a divalent metal cation</name>
        <dbReference type="ChEBI" id="CHEBI:60240"/>
        <label>1</label>
    </ligand>
</feature>
<feature type="binding site" evidence="1">
    <location>
        <position position="169"/>
    </location>
    <ligand>
        <name>a divalent metal cation</name>
        <dbReference type="ChEBI" id="CHEBI:60240"/>
        <label>2</label>
    </ligand>
</feature>
<feature type="binding site" evidence="1">
    <location>
        <position position="201"/>
    </location>
    <ligand>
        <name>a divalent metal cation</name>
        <dbReference type="ChEBI" id="CHEBI:60240"/>
        <label>2</label>
    </ligand>
</feature>
<feature type="binding site" evidence="1">
    <location>
        <position position="230"/>
    </location>
    <ligand>
        <name>a divalent metal cation</name>
        <dbReference type="ChEBI" id="CHEBI:60240"/>
        <label>2</label>
    </ligand>
</feature>
<feature type="binding site" evidence="1">
    <location>
        <position position="298"/>
    </location>
    <ligand>
        <name>a divalent metal cation</name>
        <dbReference type="ChEBI" id="CHEBI:60240"/>
        <label>1</label>
    </ligand>
</feature>
<sequence length="350" mass="39297">MSTVQTVLGTITPNLLGRTLTHEHVALDFEHFYRPPPPDFESELKAKISMSTLGYVRLYPYSSKENVRFYDGEALEAAKKDVLLYKKHGGGSIVENSSYGLKRNLEFIVELAKSTGVHFIAGTGHYIHAMQDASHASLTVEQMSDLYSKDIITGLQVNGKVVKCGFIGEVASVYPIHDFEKNAIKAAGEIQEVLGCGVSMHPHRVTKAPFEIMRLYLEAGGRADKCVMSHLDRTIFDIDELLEFAKLGCYIQYDLFGTECSFYQLNTSVDMISDGQRIDNLIKLIKEGLVDKLLMSHDIHTKHRLTSYGGHGYHHIHTNILPRMFDRGVTLEQVEQMTVTNPAKWLAFDP</sequence>
<keyword id="KW-0378">Hydrolase</keyword>
<keyword id="KW-0479">Metal-binding</keyword>
<keyword id="KW-1185">Reference proteome</keyword>
<dbReference type="EC" id="3.1.-.-"/>
<dbReference type="EMBL" id="AE014297">
    <property type="protein sequence ID" value="AAF54363.1"/>
    <property type="molecule type" value="Genomic_DNA"/>
</dbReference>
<dbReference type="EMBL" id="AY071616">
    <property type="protein sequence ID" value="AAL49238.1"/>
    <property type="molecule type" value="mRNA"/>
</dbReference>
<dbReference type="RefSeq" id="NP_731339.1">
    <property type="nucleotide sequence ID" value="NM_169272.2"/>
</dbReference>
<dbReference type="SMR" id="Q9VHF2"/>
<dbReference type="BioGRID" id="66281">
    <property type="interactions" value="1"/>
</dbReference>
<dbReference type="FunCoup" id="Q9VHF2">
    <property type="interactions" value="2"/>
</dbReference>
<dbReference type="IntAct" id="Q9VHF2">
    <property type="interactions" value="1"/>
</dbReference>
<dbReference type="STRING" id="7227.FBpp0081503"/>
<dbReference type="PaxDb" id="7227-FBpp0081503"/>
<dbReference type="DNASU" id="41116"/>
<dbReference type="EnsemblMetazoa" id="FBtr0082025">
    <property type="protein sequence ID" value="FBpp0081503"/>
    <property type="gene ID" value="FBgn0037683"/>
</dbReference>
<dbReference type="GeneID" id="41116"/>
<dbReference type="KEGG" id="dme:Dmel_CG18473"/>
<dbReference type="UCSC" id="CG18473-RA">
    <property type="organism name" value="d. melanogaster"/>
</dbReference>
<dbReference type="AGR" id="FB:FBgn0037683"/>
<dbReference type="FlyBase" id="FBgn0037683">
    <property type="gene designation" value="CG18473"/>
</dbReference>
<dbReference type="VEuPathDB" id="VectorBase:FBgn0037683"/>
<dbReference type="eggNOG" id="ENOG502QQQR">
    <property type="taxonomic scope" value="Eukaryota"/>
</dbReference>
<dbReference type="GeneTree" id="ENSGT00390000006960"/>
<dbReference type="HOGENOM" id="CLU_054760_0_1_1"/>
<dbReference type="InParanoid" id="Q9VHF2"/>
<dbReference type="OMA" id="MVKCGFI"/>
<dbReference type="OrthoDB" id="9998343at2759"/>
<dbReference type="PhylomeDB" id="Q9VHF2"/>
<dbReference type="BioGRID-ORCS" id="41116">
    <property type="hits" value="0 hits in 3 CRISPR screens"/>
</dbReference>
<dbReference type="GenomeRNAi" id="41116"/>
<dbReference type="PRO" id="PR:Q9VHF2"/>
<dbReference type="Proteomes" id="UP000000803">
    <property type="component" value="Chromosome 3R"/>
</dbReference>
<dbReference type="Bgee" id="FBgn0037683">
    <property type="expression patterns" value="Expressed in Malpighian tubule and 25 other cell types or tissues"/>
</dbReference>
<dbReference type="GO" id="GO:0016788">
    <property type="term" value="F:hydrolase activity, acting on ester bonds"/>
    <property type="evidence" value="ECO:0007669"/>
    <property type="project" value="InterPro"/>
</dbReference>
<dbReference type="GO" id="GO:0008270">
    <property type="term" value="F:zinc ion binding"/>
    <property type="evidence" value="ECO:0007669"/>
    <property type="project" value="InterPro"/>
</dbReference>
<dbReference type="GO" id="GO:0009056">
    <property type="term" value="P:catabolic process"/>
    <property type="evidence" value="ECO:0007669"/>
    <property type="project" value="InterPro"/>
</dbReference>
<dbReference type="CDD" id="cd00530">
    <property type="entry name" value="PTE"/>
    <property type="match status" value="1"/>
</dbReference>
<dbReference type="Gene3D" id="3.20.20.140">
    <property type="entry name" value="Metal-dependent hydrolases"/>
    <property type="match status" value="1"/>
</dbReference>
<dbReference type="InterPro" id="IPR017947">
    <property type="entry name" value="AryldialkylPase_Zn-BS"/>
</dbReference>
<dbReference type="InterPro" id="IPR032466">
    <property type="entry name" value="Metal_Hydrolase"/>
</dbReference>
<dbReference type="InterPro" id="IPR001559">
    <property type="entry name" value="Phosphotriesterase"/>
</dbReference>
<dbReference type="PANTHER" id="PTHR10819">
    <property type="entry name" value="PHOSPHOTRIESTERASE-RELATED"/>
    <property type="match status" value="1"/>
</dbReference>
<dbReference type="PANTHER" id="PTHR10819:SF3">
    <property type="entry name" value="PHOSPHOTRIESTERASE-RELATED PROTEIN"/>
    <property type="match status" value="1"/>
</dbReference>
<dbReference type="Pfam" id="PF02126">
    <property type="entry name" value="PTE"/>
    <property type="match status" value="1"/>
</dbReference>
<dbReference type="SUPFAM" id="SSF51556">
    <property type="entry name" value="Metallo-dependent hydrolases"/>
    <property type="match status" value="1"/>
</dbReference>
<dbReference type="PROSITE" id="PS01322">
    <property type="entry name" value="PHOSPHOTRIESTERASE_1"/>
    <property type="match status" value="1"/>
</dbReference>
<dbReference type="PROSITE" id="PS51347">
    <property type="entry name" value="PHOSPHOTRIESTERASE_2"/>
    <property type="match status" value="1"/>
</dbReference>
<proteinExistence type="evidence at transcript level"/>
<gene>
    <name type="ORF">CG18473</name>
</gene>
<organism>
    <name type="scientific">Drosophila melanogaster</name>
    <name type="common">Fruit fly</name>
    <dbReference type="NCBI Taxonomy" id="7227"/>
    <lineage>
        <taxon>Eukaryota</taxon>
        <taxon>Metazoa</taxon>
        <taxon>Ecdysozoa</taxon>
        <taxon>Arthropoda</taxon>
        <taxon>Hexapoda</taxon>
        <taxon>Insecta</taxon>
        <taxon>Pterygota</taxon>
        <taxon>Neoptera</taxon>
        <taxon>Endopterygota</taxon>
        <taxon>Diptera</taxon>
        <taxon>Brachycera</taxon>
        <taxon>Muscomorpha</taxon>
        <taxon>Ephydroidea</taxon>
        <taxon>Drosophilidae</taxon>
        <taxon>Drosophila</taxon>
        <taxon>Sophophora</taxon>
    </lineage>
</organism>